<gene>
    <name evidence="1" type="primary">ynfA</name>
    <name type="ordered locus">EcE24377A_1789</name>
</gene>
<proteinExistence type="inferred from homology"/>
<sequence length="108" mass="11920">MIKTTLLFFATALCEIIGCFLPWLWLKRNASIWLLLPAGISLALFVWLLTLHPAASGRVYAAYGGVYVCTALMWLRVVDGVKLTLYDWTGALIALCGMLIIVAGWGRT</sequence>
<reference key="1">
    <citation type="journal article" date="2008" name="J. Bacteriol.">
        <title>The pangenome structure of Escherichia coli: comparative genomic analysis of E. coli commensal and pathogenic isolates.</title>
        <authorList>
            <person name="Rasko D.A."/>
            <person name="Rosovitz M.J."/>
            <person name="Myers G.S.A."/>
            <person name="Mongodin E.F."/>
            <person name="Fricke W.F."/>
            <person name="Gajer P."/>
            <person name="Crabtree J."/>
            <person name="Sebaihia M."/>
            <person name="Thomson N.R."/>
            <person name="Chaudhuri R."/>
            <person name="Henderson I.R."/>
            <person name="Sperandio V."/>
            <person name="Ravel J."/>
        </authorList>
    </citation>
    <scope>NUCLEOTIDE SEQUENCE [LARGE SCALE GENOMIC DNA]</scope>
    <source>
        <strain>E24377A / ETEC</strain>
    </source>
</reference>
<dbReference type="EMBL" id="CP000800">
    <property type="protein sequence ID" value="ABV16517.1"/>
    <property type="molecule type" value="Genomic_DNA"/>
</dbReference>
<dbReference type="RefSeq" id="WP_000598292.1">
    <property type="nucleotide sequence ID" value="NC_009801.1"/>
</dbReference>
<dbReference type="SMR" id="A7ZM41"/>
<dbReference type="KEGG" id="ecw:EcE24377A_1789"/>
<dbReference type="HOGENOM" id="CLU_117653_2_1_6"/>
<dbReference type="Proteomes" id="UP000001122">
    <property type="component" value="Chromosome"/>
</dbReference>
<dbReference type="GO" id="GO:0005886">
    <property type="term" value="C:plasma membrane"/>
    <property type="evidence" value="ECO:0007669"/>
    <property type="project" value="UniProtKB-SubCell"/>
</dbReference>
<dbReference type="HAMAP" id="MF_00010">
    <property type="entry name" value="UPF0060"/>
    <property type="match status" value="1"/>
</dbReference>
<dbReference type="InterPro" id="IPR003844">
    <property type="entry name" value="UPF0060"/>
</dbReference>
<dbReference type="NCBIfam" id="NF002586">
    <property type="entry name" value="PRK02237.1"/>
    <property type="match status" value="1"/>
</dbReference>
<dbReference type="PANTHER" id="PTHR36116">
    <property type="entry name" value="UPF0060 MEMBRANE PROTEIN YNFA"/>
    <property type="match status" value="1"/>
</dbReference>
<dbReference type="PANTHER" id="PTHR36116:SF1">
    <property type="entry name" value="UPF0060 MEMBRANE PROTEIN YNFA"/>
    <property type="match status" value="1"/>
</dbReference>
<dbReference type="Pfam" id="PF02694">
    <property type="entry name" value="UPF0060"/>
    <property type="match status" value="1"/>
</dbReference>
<dbReference type="SUPFAM" id="SSF103481">
    <property type="entry name" value="Multidrug resistance efflux transporter EmrE"/>
    <property type="match status" value="1"/>
</dbReference>
<name>YNFA_ECO24</name>
<evidence type="ECO:0000255" key="1">
    <source>
        <dbReference type="HAMAP-Rule" id="MF_00010"/>
    </source>
</evidence>
<protein>
    <recommendedName>
        <fullName evidence="1">UPF0060 membrane protein YnfA</fullName>
    </recommendedName>
</protein>
<comment type="subcellular location">
    <subcellularLocation>
        <location evidence="1">Cell inner membrane</location>
        <topology evidence="1">Multi-pass membrane protein</topology>
    </subcellularLocation>
</comment>
<comment type="similarity">
    <text evidence="1">Belongs to the UPF0060 family.</text>
</comment>
<keyword id="KW-0997">Cell inner membrane</keyword>
<keyword id="KW-1003">Cell membrane</keyword>
<keyword id="KW-0472">Membrane</keyword>
<keyword id="KW-1185">Reference proteome</keyword>
<keyword id="KW-0812">Transmembrane</keyword>
<keyword id="KW-1133">Transmembrane helix</keyword>
<organism>
    <name type="scientific">Escherichia coli O139:H28 (strain E24377A / ETEC)</name>
    <dbReference type="NCBI Taxonomy" id="331111"/>
    <lineage>
        <taxon>Bacteria</taxon>
        <taxon>Pseudomonadati</taxon>
        <taxon>Pseudomonadota</taxon>
        <taxon>Gammaproteobacteria</taxon>
        <taxon>Enterobacterales</taxon>
        <taxon>Enterobacteriaceae</taxon>
        <taxon>Escherichia</taxon>
    </lineage>
</organism>
<accession>A7ZM41</accession>
<feature type="chain" id="PRO_1000057078" description="UPF0060 membrane protein YnfA">
    <location>
        <begin position="1"/>
        <end position="108"/>
    </location>
</feature>
<feature type="topological domain" description="Periplasmic" evidence="1">
    <location>
        <begin position="1"/>
        <end position="5"/>
    </location>
</feature>
<feature type="transmembrane region" description="Helical" evidence="1">
    <location>
        <begin position="6"/>
        <end position="26"/>
    </location>
</feature>
<feature type="topological domain" description="Cytoplasmic" evidence="1">
    <location>
        <begin position="27"/>
        <end position="30"/>
    </location>
</feature>
<feature type="transmembrane region" description="Helical" evidence="1">
    <location>
        <begin position="31"/>
        <end position="51"/>
    </location>
</feature>
<feature type="topological domain" description="Periplasmic" evidence="1">
    <location>
        <begin position="52"/>
        <end position="60"/>
    </location>
</feature>
<feature type="transmembrane region" description="Helical" evidence="1">
    <location>
        <begin position="61"/>
        <end position="81"/>
    </location>
</feature>
<feature type="topological domain" description="Cytoplasmic" evidence="1">
    <location>
        <begin position="82"/>
        <end position="84"/>
    </location>
</feature>
<feature type="transmembrane region" description="Helical" evidence="1">
    <location>
        <begin position="85"/>
        <end position="105"/>
    </location>
</feature>
<feature type="topological domain" description="Periplasmic" evidence="1">
    <location>
        <begin position="106"/>
        <end position="108"/>
    </location>
</feature>